<sequence length="2103" mass="241041">MLLAICSRTIRQQGLNCPPAVTFTSSHMRPPIPSFLLWTEGSDVLMDFDLDTIPAGSVTGSSIGPKFKIKTQAASSFVHDFTFAHWCDASDMPLRDHFPLVNDTFDHWTPDFISQRLDGSKVVVEFTTNRSDQEQSLISAFNTKVGKYEVALHNRSTTSSILFGVVVVSETTVVTNLNLNQQEVDELCFRFLVARAVHLEMTTKMIIPEYDDEDEDKRSREVKAAFHSVQPDWNVTEANFAPFSRRMFSNFAQMEPDKEYLAHIILDSLKQAQADLDGNHYLNESLTEQARLDRNREESLNMVKDFERDFNNAAQRSAWSHKSTVPFPGVIPKVSGDTTSLSRLVELPVITGGSDATIRAWRSAYGSVSNGTVERCDEDVERERRAALCSLTVEELEESKALRMKYHRCKIDNGMMDKLDLAMQGVEAKEFKNHPSIIKKRSKSKKTFPLTADTRDIDLFLHHDDLMFNNEHSQTPPAAMIEAVKAGADAQSLHGLDKSANPWYASALWFLGLPIGLWLFMCTCIGVELSISLKQHCGRQKFIIKKLRFFDIFLLIKPTNSGSHVFYSIAFPESAILGKLHRSQCFKGLQFEDGWFWTEFSSFKMSKLTNVVKCLSTGFNLFWFWRDYYEVPFWAGNEKDFQTGKQRANKMFKFCLLMLLEDKARTEEIATLSRYVMMEGFVSPPCIPKPQKMIEKLPNLARTKFQVWLISRMLQTIIRVSDYPFKITAGHKSANWTGMFNWVTGEPIESTQKLISLFYLGYLKNKEESPERNASIGMYKKILEYEDKHPGRYTYLGLGDPPSDDTRFHEYSISLLKHLCIHAEHDLRRNWGESFKAMISRDIVDAIASLDLERLATLKASSNFNEEWYQKRGDGKTYHRSKVLEKVSKYVKKSSSHVHHIMEECLRKVESQGCMHVCLFKKPQHGGLREIYVLGFEERVVQLVIETIARQICKRFKSETLTNPKQKLAIPETHGLRAVKTCGIHHETVATSDDAAKWNQCHHVTKFALMLCHFTDPLFHGFIIRGCSMFMKKRIMIDQSLIDIIDSHTTLETSDAYLQKIHRGYHGSLDDQPRWISRGGAFVQTETGMMQGILHYTSSLLHTLLQEWLRTFSQRFIRTRVSVDQRPDVLVDVLQSSDDSGMMISFPSTDKGATGKYRYLSALIFKYKKVIGKYLGIYSSVKSTNNTLHLLEFNSEFFFHINHNRPLLRWITACDTISEQESLASRQEEMYNNLTSVLEGGGSFSLVSFCQFGQLLLHYTLLGMTVSPLFLEYIKLVSEIKDPSLGYFLMDHPFGSGLSGFKYNVWVAVQNSILGSRYRSLLEAIQNSDSAAPKKTLDTTTSGTFVQSTIIRFGDRKKWQRLVDRLNLPEDWLDVIDKNPEIVYRRPRDGFEVSLRIAEKVHSPGVSNSLSKGNCIIRVISSSVYILSRSILSDGLAWLYDEEEEVKRPLLYKVMNQPELDLHSRLTPAQLSTLFPMMAEFEKLQTHLRSYMKIEGEFISKKKVITQTRVNILETERFLRARPEDLIADKWFGFTRTRMTPRTFKEEWENLTSVFPWLTGNPSETLELSPFQHHVQLRNFFSRLDLKGRDIRIIGAPIKKSSGVSNVSTAIRDNFFPRFVLTHIPDEAAMERIEAAGILKHALFLTVTGPYTDQSKLDMCRDFITSSEPITLKPNHGKTRTNVLSLFQDYFSKRGPDIIFNRIQMANCGVIGGFTSPQKPKEVDGKIVYTGDGVWRGIVDGFQIQLVITYMPKQKSNELKSITVNSDRCISALSSFCQSWCKEMGVFNTEDFSKTQRFSKASFFMHKFKISGSKQTLGAPIFIVSEKIFRPICWDPSKLEFRVRGNTLNLTYKEVNPGAGQRMFNILSYTVKDTDVSDENAFKLMSLSPRHKFHGREPSTSWICMRALPISTIDKLLERILNRERISGSIDNERLAECFKNVMESTLRRKGVFLSEFSRATQKMLDGLSRDMLDFFAEAGLNDDLLLEEEPWLSGLDTFMLDDEAYLEEYNLGPFGVFSVEQEMNTKYYHHLLLDSLVEDVIQKLSLDGLRKLFQEEEAPLEYKKEVIRLLNILQRDASQIKWKSRDLLSENMGLDVDDDMFG</sequence>
<name>L_UUKS</name>
<protein>
    <recommendedName>
        <fullName>RNA-directed RNA polymerase L</fullName>
        <shortName>Protein L</shortName>
        <ecNumber evidence="3">2.7.7.48</ecNumber>
    </recommendedName>
    <alternativeName>
        <fullName>Large structural protein</fullName>
    </alternativeName>
    <alternativeName>
        <fullName>Replicase</fullName>
    </alternativeName>
    <alternativeName>
        <fullName>Transcriptase</fullName>
    </alternativeName>
    <domain>
        <recommendedName>
            <fullName>cap-snatching endonuclease</fullName>
            <ecNumber evidence="3">3.1.-.-</ecNumber>
        </recommendedName>
    </domain>
</protein>
<organism>
    <name type="scientific">Uukuniemi virus (strain S23)</name>
    <name type="common">UUKV</name>
    <dbReference type="NCBI Taxonomy" id="487099"/>
    <lineage>
        <taxon>Viruses</taxon>
        <taxon>Riboviria</taxon>
        <taxon>Orthornavirae</taxon>
        <taxon>Negarnaviricota</taxon>
        <taxon>Polyploviricotina</taxon>
        <taxon>Ellioviricetes</taxon>
        <taxon>Bunyavirales</taxon>
        <taxon>Phenuiviridae</taxon>
        <taxon>Phlebovirus</taxon>
        <taxon>Uukuniemi phlebovirus</taxon>
    </lineage>
</organism>
<feature type="chain" id="PRO_0000222028" description="RNA-directed RNA polymerase L">
    <location>
        <begin position="1"/>
        <end position="2103"/>
    </location>
</feature>
<feature type="domain" description="RdRp catalytic" evidence="6">
    <location>
        <begin position="978"/>
        <end position="1175"/>
    </location>
</feature>
<feature type="region of interest" description="Endonuclease" evidence="2">
    <location>
        <begin position="18"/>
        <end position="216"/>
    </location>
</feature>
<feature type="region of interest" description="Cap-binding" evidence="2">
    <location>
        <begin position="1707"/>
        <end position="1825"/>
    </location>
</feature>
<feature type="active site" description="For endonuclease activity" evidence="3">
    <location>
        <position position="144"/>
    </location>
</feature>
<feature type="binding site" evidence="2">
    <location>
        <position position="79"/>
    </location>
    <ligand>
        <name>Mn(2+)</name>
        <dbReference type="ChEBI" id="CHEBI:29035"/>
        <label>1</label>
    </ligand>
</feature>
<feature type="binding site" evidence="2">
    <location>
        <position position="111"/>
    </location>
    <ligand>
        <name>Mn(2+)</name>
        <dbReference type="ChEBI" id="CHEBI:29035"/>
        <label>1</label>
    </ligand>
</feature>
<feature type="binding site" evidence="2">
    <location>
        <position position="111"/>
    </location>
    <ligand>
        <name>Mn(2+)</name>
        <dbReference type="ChEBI" id="CHEBI:29035"/>
        <label>2</label>
    </ligand>
</feature>
<feature type="binding site" evidence="2">
    <location>
        <position position="125"/>
    </location>
    <ligand>
        <name>Mn(2+)</name>
        <dbReference type="ChEBI" id="CHEBI:29035"/>
        <label>1</label>
    </ligand>
</feature>
<feature type="binding site" evidence="3">
    <location>
        <position position="1139"/>
    </location>
    <ligand>
        <name>Mg(2+)</name>
        <dbReference type="ChEBI" id="CHEBI:18420"/>
        <note>catalytic; for RdRp activity</note>
    </ligand>
</feature>
<feature type="site" description="Interaction with the cap substrate" evidence="1">
    <location>
        <position position="1714"/>
    </location>
</feature>
<feature type="site" description="Interaction with the cap substrate" evidence="1">
    <location>
        <position position="1718"/>
    </location>
</feature>
<feature type="site" description="Interaction with the cap substrate" evidence="1">
    <location>
        <position position="1729"/>
    </location>
</feature>
<feature type="site" description="Interaction with the cap substrate" evidence="1">
    <location>
        <position position="1784"/>
    </location>
</feature>
<proteinExistence type="inferred from homology"/>
<gene>
    <name type="primary">L</name>
</gene>
<dbReference type="EC" id="2.7.7.48" evidence="3"/>
<dbReference type="EC" id="3.1.-.-" evidence="3"/>
<dbReference type="EMBL" id="D10759">
    <property type="protein sequence ID" value="BAA01590.1"/>
    <property type="molecule type" value="Genomic_RNA"/>
</dbReference>
<dbReference type="PIR" id="JQ1621">
    <property type="entry name" value="JQ1621"/>
</dbReference>
<dbReference type="SMR" id="P33453"/>
<dbReference type="IntAct" id="P33453">
    <property type="interactions" value="1"/>
</dbReference>
<dbReference type="KEGG" id="vg:2943071"/>
<dbReference type="Proteomes" id="UP000008595">
    <property type="component" value="Genome"/>
</dbReference>
<dbReference type="GO" id="GO:0044165">
    <property type="term" value="C:host cell endoplasmic reticulum"/>
    <property type="evidence" value="ECO:0007669"/>
    <property type="project" value="UniProtKB-SubCell"/>
</dbReference>
<dbReference type="GO" id="GO:0044172">
    <property type="term" value="C:host cell endoplasmic reticulum-Golgi intermediate compartment"/>
    <property type="evidence" value="ECO:0007669"/>
    <property type="project" value="UniProtKB-SubCell"/>
</dbReference>
<dbReference type="GO" id="GO:0044177">
    <property type="term" value="C:host cell Golgi apparatus"/>
    <property type="evidence" value="ECO:0007669"/>
    <property type="project" value="UniProtKB-SubCell"/>
</dbReference>
<dbReference type="GO" id="GO:0044423">
    <property type="term" value="C:virion component"/>
    <property type="evidence" value="ECO:0007669"/>
    <property type="project" value="UniProtKB-KW"/>
</dbReference>
<dbReference type="GO" id="GO:0016787">
    <property type="term" value="F:hydrolase activity"/>
    <property type="evidence" value="ECO:0007669"/>
    <property type="project" value="UniProtKB-KW"/>
</dbReference>
<dbReference type="GO" id="GO:0046872">
    <property type="term" value="F:metal ion binding"/>
    <property type="evidence" value="ECO:0007669"/>
    <property type="project" value="UniProtKB-KW"/>
</dbReference>
<dbReference type="GO" id="GO:0001882">
    <property type="term" value="F:nucleoside binding"/>
    <property type="evidence" value="ECO:0007669"/>
    <property type="project" value="InterPro"/>
</dbReference>
<dbReference type="GO" id="GO:0000166">
    <property type="term" value="F:nucleotide binding"/>
    <property type="evidence" value="ECO:0007669"/>
    <property type="project" value="UniProtKB-KW"/>
</dbReference>
<dbReference type="GO" id="GO:0003968">
    <property type="term" value="F:RNA-directed RNA polymerase activity"/>
    <property type="evidence" value="ECO:0007669"/>
    <property type="project" value="UniProtKB-KW"/>
</dbReference>
<dbReference type="GO" id="GO:0006351">
    <property type="term" value="P:DNA-templated transcription"/>
    <property type="evidence" value="ECO:0007669"/>
    <property type="project" value="InterPro"/>
</dbReference>
<dbReference type="GO" id="GO:0039689">
    <property type="term" value="P:negative stranded viral RNA replication"/>
    <property type="evidence" value="ECO:0000250"/>
    <property type="project" value="UniProtKB"/>
</dbReference>
<dbReference type="GO" id="GO:0039696">
    <property type="term" value="P:RNA-templated viral transcription"/>
    <property type="evidence" value="ECO:0000250"/>
    <property type="project" value="UniProtKB"/>
</dbReference>
<dbReference type="InterPro" id="IPR022531">
    <property type="entry name" value="L_PA-C-like"/>
</dbReference>
<dbReference type="InterPro" id="IPR029124">
    <property type="entry name" value="L_protein_N"/>
</dbReference>
<dbReference type="InterPro" id="IPR007099">
    <property type="entry name" value="RNA-dir_pol_NSvirus"/>
</dbReference>
<dbReference type="InterPro" id="IPR014385">
    <property type="entry name" value="RNA-dir_pol_phlebovirus"/>
</dbReference>
<dbReference type="InterPro" id="IPR007322">
    <property type="entry name" value="RNA_pol_bunyavir"/>
</dbReference>
<dbReference type="Pfam" id="PF04196">
    <property type="entry name" value="Bunya_RdRp"/>
    <property type="match status" value="1"/>
</dbReference>
<dbReference type="Pfam" id="PF12603">
    <property type="entry name" value="L_PA-C-like"/>
    <property type="match status" value="1"/>
</dbReference>
<dbReference type="Pfam" id="PF15518">
    <property type="entry name" value="L_protein_N"/>
    <property type="match status" value="1"/>
</dbReference>
<dbReference type="PIRSF" id="PIRSF000826">
    <property type="entry name" value="L_PhleboV"/>
    <property type="match status" value="1"/>
</dbReference>
<dbReference type="PROSITE" id="PS50525">
    <property type="entry name" value="RDRP_SSRNA_NEG_SEG"/>
    <property type="match status" value="1"/>
</dbReference>
<reference key="1">
    <citation type="journal article" date="1992" name="J. Gen. Virol.">
        <title>Nucleotide sequence and coding strategy of the Uukuniemi virus L RNA segment.</title>
        <authorList>
            <person name="Elliott R.M."/>
            <person name="Dunn E."/>
            <person name="Simons J.F."/>
            <person name="Pettersson R.F."/>
        </authorList>
    </citation>
    <scope>NUCLEOTIDE SEQUENCE [GENOMIC RNA]</scope>
</reference>
<reference key="2">
    <citation type="journal article" date="2017" name="Crit. Rev. Microbiol.">
        <title>Bunyaviridae RdRps: structure, motifs, and RNA synthesis machinery.</title>
        <authorList>
            <person name="Amroun A."/>
            <person name="Priet S."/>
            <person name="de Lamballerie X."/>
            <person name="Querat G."/>
        </authorList>
    </citation>
    <scope>REVIEW</scope>
</reference>
<reference key="3">
    <citation type="journal article" date="2020" name="Trends Microbiol.">
        <title>The Cap-Snatching Mechanism of Bunyaviruses.</title>
        <authorList>
            <person name="Olschewski S."/>
            <person name="Cusack S."/>
            <person name="Rosenthal M."/>
        </authorList>
    </citation>
    <scope>REVIEW</scope>
</reference>
<comment type="function">
    <text evidence="2 3 5">RNA-dependent RNA polymerase, which is responsible for the replication and transcription of the viral RNA genome using antigenomic RNA as an intermediate (By similarity). During transcription, synthesizes subgenomic RNAs and assures their capping by a cap-snatching mechanism, which involves the endonuclease activity cleaving the host capped pre-mRNAs (By similarity). These short capped RNAs are then used as primers for viral transcription. The 3'-end of subgenomic mRNAs molecules are not polyadenylated. During replication, the polymerase binds the 5' and 3' vRNA extremities at distinct sites (By similarity). In turn, significant conformational changes occur in the polymerase and in vRNA to initiate active RNA synthesis (By similarity). As a consequence of the use of the same enzyme for both transcription and replication, these mechanisms need to be well coordinated (By similarity).</text>
</comment>
<comment type="catalytic activity">
    <reaction evidence="6">
        <text>RNA(n) + a ribonucleoside 5'-triphosphate = RNA(n+1) + diphosphate</text>
        <dbReference type="Rhea" id="RHEA:21248"/>
        <dbReference type="Rhea" id="RHEA-COMP:14527"/>
        <dbReference type="Rhea" id="RHEA-COMP:17342"/>
        <dbReference type="ChEBI" id="CHEBI:33019"/>
        <dbReference type="ChEBI" id="CHEBI:61557"/>
        <dbReference type="ChEBI" id="CHEBI:140395"/>
        <dbReference type="EC" id="2.7.7.48"/>
    </reaction>
</comment>
<comment type="cofactor">
    <cofactor evidence="5">
        <name>Mn(2+)</name>
        <dbReference type="ChEBI" id="CHEBI:29035"/>
    </cofactor>
    <text evidence="5 7">For endonuclease activity. Binds 2 Mn(2+) ions in the active site (By similarity). The divalent metal ions are crucial for catalytic activity (PubMed:31948728).</text>
</comment>
<comment type="cofactor">
    <cofactor evidence="5">
        <name>Mg(2+)</name>
        <dbReference type="ChEBI" id="CHEBI:18420"/>
    </cofactor>
    <cofactor evidence="5">
        <name>Mn(2+)</name>
        <dbReference type="ChEBI" id="CHEBI:29035"/>
    </cofactor>
    <text evidence="5">For polymerase activity. Initiation activity is stronger in the presence of Mn(2+) than in the presence of Mg(2+).</text>
</comment>
<comment type="subunit">
    <text evidence="5">Homomultimer (By similarity). Interacts with the glycoprotein N; this interaction allows efficient polymerase packaging into virus particles (By similarity). Interacts with nucleoprotein N (By similarity).</text>
</comment>
<comment type="subcellular location">
    <subcellularLocation>
        <location evidence="3">Host Golgi apparatus</location>
    </subcellularLocation>
    <subcellularLocation>
        <location>Host endoplasmic reticulum</location>
    </subcellularLocation>
    <subcellularLocation>
        <location evidence="3">Host endoplasmic reticulum-Golgi intermediate compartment</location>
    </subcellularLocation>
    <subcellularLocation>
        <location evidence="4">Virion</location>
    </subcellularLocation>
</comment>
<comment type="domain">
    <text evidence="3">The N-terminus contains the endonuclease activity (endoN) (By similarity). The central region contains the RdRp activity (By similarity). The C-terminus contains the cap-binding region (By similarity).</text>
</comment>
<comment type="miscellaneous">
    <text evidence="8">Classified as His(+) endonuclease since it has a histidine upstream of the active site that coordinates the first cation.</text>
</comment>
<comment type="similarity">
    <text evidence="9">Belongs to the Bunyavirales RNA polymerase family.</text>
</comment>
<evidence type="ECO:0000250" key="1">
    <source>
        <dbReference type="UniProtKB" id="A2SZS3"/>
    </source>
</evidence>
<evidence type="ECO:0000250" key="2">
    <source>
        <dbReference type="UniProtKB" id="A5HC98"/>
    </source>
</evidence>
<evidence type="ECO:0000250" key="3">
    <source>
        <dbReference type="UniProtKB" id="I0DF35"/>
    </source>
</evidence>
<evidence type="ECO:0000250" key="4">
    <source>
        <dbReference type="UniProtKB" id="P20470"/>
    </source>
</evidence>
<evidence type="ECO:0000250" key="5">
    <source>
        <dbReference type="UniProtKB" id="P27316"/>
    </source>
</evidence>
<evidence type="ECO:0000255" key="6">
    <source>
        <dbReference type="PROSITE-ProRule" id="PRU00539"/>
    </source>
</evidence>
<evidence type="ECO:0000269" key="7">
    <source>
    </source>
</evidence>
<evidence type="ECO:0000303" key="8">
    <source>
    </source>
</evidence>
<evidence type="ECO:0000305" key="9"/>
<keyword id="KW-1038">Host endoplasmic reticulum</keyword>
<keyword id="KW-1040">Host Golgi apparatus</keyword>
<keyword id="KW-0378">Hydrolase</keyword>
<keyword id="KW-0460">Magnesium</keyword>
<keyword id="KW-0464">Manganese</keyword>
<keyword id="KW-0479">Metal-binding</keyword>
<keyword id="KW-0547">Nucleotide-binding</keyword>
<keyword id="KW-0548">Nucleotidyltransferase</keyword>
<keyword id="KW-1185">Reference proteome</keyword>
<keyword id="KW-0696">RNA-directed RNA polymerase</keyword>
<keyword id="KW-0808">Transferase</keyword>
<keyword id="KW-0693">Viral RNA replication</keyword>
<keyword id="KW-0946">Virion</keyword>
<organismHost>
    <name type="scientific">Homo sapiens</name>
    <name type="common">Human</name>
    <dbReference type="NCBI Taxonomy" id="9606"/>
</organismHost>
<organismHost>
    <name type="scientific">Ixodes ricinus</name>
    <name type="common">Common tick</name>
    <name type="synonym">Acarus ricinus</name>
    <dbReference type="NCBI Taxonomy" id="34613"/>
</organismHost>
<accession>P33453</accession>